<sequence>MTLQEQIMKALHVQPVIDLKAEIRKRVDFLKDYVKKTGAKGFVLGISGGQDSTLAGRLAQLAVEEIRNEGGNATFIAVRLPYKVQKDEDDAQLALQFIQADQSVAFDIASTVDAFSNQYENLLDESLTDFNKGNVKARIRMVTQYAIGGQKGLLVIGTDHAAEAVTGFFTKFGDGGADLLPLTGLTKRQGRALLQELGADERLYLKMPTADLLDEKPGQADETELGITYDQLDDYLEGKTVPADVAEKIEKRYTVSEHKRQVPASMFDDWWK</sequence>
<accession>Q6HJW8</accession>
<evidence type="ECO:0000255" key="1">
    <source>
        <dbReference type="HAMAP-Rule" id="MF_00193"/>
    </source>
</evidence>
<organism>
    <name type="scientific">Bacillus thuringiensis subsp. konkukian (strain 97-27)</name>
    <dbReference type="NCBI Taxonomy" id="281309"/>
    <lineage>
        <taxon>Bacteria</taxon>
        <taxon>Bacillati</taxon>
        <taxon>Bacillota</taxon>
        <taxon>Bacilli</taxon>
        <taxon>Bacillales</taxon>
        <taxon>Bacillaceae</taxon>
        <taxon>Bacillus</taxon>
        <taxon>Bacillus cereus group</taxon>
    </lineage>
</organism>
<dbReference type="EC" id="6.3.1.5" evidence="1"/>
<dbReference type="EMBL" id="AE017355">
    <property type="protein sequence ID" value="AAT63415.1"/>
    <property type="molecule type" value="Genomic_DNA"/>
</dbReference>
<dbReference type="RefSeq" id="WP_000174877.1">
    <property type="nucleotide sequence ID" value="NC_005957.1"/>
</dbReference>
<dbReference type="RefSeq" id="YP_036158.1">
    <property type="nucleotide sequence ID" value="NC_005957.1"/>
</dbReference>
<dbReference type="SMR" id="Q6HJW8"/>
<dbReference type="KEGG" id="btk:BT9727_1826"/>
<dbReference type="PATRIC" id="fig|281309.8.peg.1923"/>
<dbReference type="HOGENOM" id="CLU_059327_3_0_9"/>
<dbReference type="UniPathway" id="UPA00253">
    <property type="reaction ID" value="UER00333"/>
</dbReference>
<dbReference type="Proteomes" id="UP000001301">
    <property type="component" value="Chromosome"/>
</dbReference>
<dbReference type="GO" id="GO:0005737">
    <property type="term" value="C:cytoplasm"/>
    <property type="evidence" value="ECO:0007669"/>
    <property type="project" value="InterPro"/>
</dbReference>
<dbReference type="GO" id="GO:0005524">
    <property type="term" value="F:ATP binding"/>
    <property type="evidence" value="ECO:0007669"/>
    <property type="project" value="UniProtKB-UniRule"/>
</dbReference>
<dbReference type="GO" id="GO:0004359">
    <property type="term" value="F:glutaminase activity"/>
    <property type="evidence" value="ECO:0007669"/>
    <property type="project" value="InterPro"/>
</dbReference>
<dbReference type="GO" id="GO:0046872">
    <property type="term" value="F:metal ion binding"/>
    <property type="evidence" value="ECO:0007669"/>
    <property type="project" value="UniProtKB-KW"/>
</dbReference>
<dbReference type="GO" id="GO:0003952">
    <property type="term" value="F:NAD+ synthase (glutamine-hydrolyzing) activity"/>
    <property type="evidence" value="ECO:0007669"/>
    <property type="project" value="InterPro"/>
</dbReference>
<dbReference type="GO" id="GO:0008795">
    <property type="term" value="F:NAD+ synthase activity"/>
    <property type="evidence" value="ECO:0007669"/>
    <property type="project" value="UniProtKB-UniRule"/>
</dbReference>
<dbReference type="GO" id="GO:0009435">
    <property type="term" value="P:NAD biosynthetic process"/>
    <property type="evidence" value="ECO:0007669"/>
    <property type="project" value="UniProtKB-UniRule"/>
</dbReference>
<dbReference type="CDD" id="cd00553">
    <property type="entry name" value="NAD_synthase"/>
    <property type="match status" value="1"/>
</dbReference>
<dbReference type="FunFam" id="3.40.50.620:FF:000015">
    <property type="entry name" value="NH(3)-dependent NAD(+) synthetase"/>
    <property type="match status" value="1"/>
</dbReference>
<dbReference type="Gene3D" id="3.40.50.620">
    <property type="entry name" value="HUPs"/>
    <property type="match status" value="1"/>
</dbReference>
<dbReference type="HAMAP" id="MF_00193">
    <property type="entry name" value="NadE_ammonia_dep"/>
    <property type="match status" value="1"/>
</dbReference>
<dbReference type="InterPro" id="IPR022310">
    <property type="entry name" value="NAD/GMP_synthase"/>
</dbReference>
<dbReference type="InterPro" id="IPR003694">
    <property type="entry name" value="NAD_synthase"/>
</dbReference>
<dbReference type="InterPro" id="IPR022926">
    <property type="entry name" value="NH(3)-dep_NAD(+)_synth"/>
</dbReference>
<dbReference type="InterPro" id="IPR014729">
    <property type="entry name" value="Rossmann-like_a/b/a_fold"/>
</dbReference>
<dbReference type="NCBIfam" id="TIGR00552">
    <property type="entry name" value="nadE"/>
    <property type="match status" value="1"/>
</dbReference>
<dbReference type="NCBIfam" id="NF001979">
    <property type="entry name" value="PRK00768.1"/>
    <property type="match status" value="1"/>
</dbReference>
<dbReference type="PANTHER" id="PTHR23090">
    <property type="entry name" value="NH 3 /GLUTAMINE-DEPENDENT NAD + SYNTHETASE"/>
    <property type="match status" value="1"/>
</dbReference>
<dbReference type="PANTHER" id="PTHR23090:SF7">
    <property type="entry name" value="NH(3)-DEPENDENT NAD(+) SYNTHETASE"/>
    <property type="match status" value="1"/>
</dbReference>
<dbReference type="Pfam" id="PF02540">
    <property type="entry name" value="NAD_synthase"/>
    <property type="match status" value="1"/>
</dbReference>
<dbReference type="SUPFAM" id="SSF52402">
    <property type="entry name" value="Adenine nucleotide alpha hydrolases-like"/>
    <property type="match status" value="1"/>
</dbReference>
<proteinExistence type="inferred from homology"/>
<protein>
    <recommendedName>
        <fullName evidence="1">NH(3)-dependent NAD(+) synthetase</fullName>
        <ecNumber evidence="1">6.3.1.5</ecNumber>
    </recommendedName>
</protein>
<reference key="1">
    <citation type="journal article" date="2006" name="J. Bacteriol.">
        <title>Pathogenomic sequence analysis of Bacillus cereus and Bacillus thuringiensis isolates closely related to Bacillus anthracis.</title>
        <authorList>
            <person name="Han C.S."/>
            <person name="Xie G."/>
            <person name="Challacombe J.F."/>
            <person name="Altherr M.R."/>
            <person name="Bhotika S.S."/>
            <person name="Bruce D."/>
            <person name="Campbell C.S."/>
            <person name="Campbell M.L."/>
            <person name="Chen J."/>
            <person name="Chertkov O."/>
            <person name="Cleland C."/>
            <person name="Dimitrijevic M."/>
            <person name="Doggett N.A."/>
            <person name="Fawcett J.J."/>
            <person name="Glavina T."/>
            <person name="Goodwin L.A."/>
            <person name="Hill K.K."/>
            <person name="Hitchcock P."/>
            <person name="Jackson P.J."/>
            <person name="Keim P."/>
            <person name="Kewalramani A.R."/>
            <person name="Longmire J."/>
            <person name="Lucas S."/>
            <person name="Malfatti S."/>
            <person name="McMurry K."/>
            <person name="Meincke L.J."/>
            <person name="Misra M."/>
            <person name="Moseman B.L."/>
            <person name="Mundt M."/>
            <person name="Munk A.C."/>
            <person name="Okinaka R.T."/>
            <person name="Parson-Quintana B."/>
            <person name="Reilly L.P."/>
            <person name="Richardson P."/>
            <person name="Robinson D.L."/>
            <person name="Rubin E."/>
            <person name="Saunders E."/>
            <person name="Tapia R."/>
            <person name="Tesmer J.G."/>
            <person name="Thayer N."/>
            <person name="Thompson L.S."/>
            <person name="Tice H."/>
            <person name="Ticknor L.O."/>
            <person name="Wills P.L."/>
            <person name="Brettin T.S."/>
            <person name="Gilna P."/>
        </authorList>
    </citation>
    <scope>NUCLEOTIDE SEQUENCE [LARGE SCALE GENOMIC DNA]</scope>
    <source>
        <strain>97-27</strain>
    </source>
</reference>
<feature type="chain" id="PRO_1000077536" description="NH(3)-dependent NAD(+) synthetase">
    <location>
        <begin position="1"/>
        <end position="272"/>
    </location>
</feature>
<feature type="binding site" evidence="1">
    <location>
        <begin position="45"/>
        <end position="52"/>
    </location>
    <ligand>
        <name>ATP</name>
        <dbReference type="ChEBI" id="CHEBI:30616"/>
    </ligand>
</feature>
<feature type="binding site" evidence="1">
    <location>
        <position position="51"/>
    </location>
    <ligand>
        <name>Mg(2+)</name>
        <dbReference type="ChEBI" id="CHEBI:18420"/>
    </ligand>
</feature>
<feature type="binding site" evidence="1">
    <location>
        <position position="138"/>
    </location>
    <ligand>
        <name>deamido-NAD(+)</name>
        <dbReference type="ChEBI" id="CHEBI:58437"/>
    </ligand>
</feature>
<feature type="binding site" evidence="1">
    <location>
        <position position="158"/>
    </location>
    <ligand>
        <name>ATP</name>
        <dbReference type="ChEBI" id="CHEBI:30616"/>
    </ligand>
</feature>
<feature type="binding site" evidence="1">
    <location>
        <position position="163"/>
    </location>
    <ligand>
        <name>Mg(2+)</name>
        <dbReference type="ChEBI" id="CHEBI:18420"/>
    </ligand>
</feature>
<feature type="binding site" evidence="1">
    <location>
        <position position="171"/>
    </location>
    <ligand>
        <name>deamido-NAD(+)</name>
        <dbReference type="ChEBI" id="CHEBI:58437"/>
    </ligand>
</feature>
<feature type="binding site" evidence="1">
    <location>
        <position position="178"/>
    </location>
    <ligand>
        <name>deamido-NAD(+)</name>
        <dbReference type="ChEBI" id="CHEBI:58437"/>
    </ligand>
</feature>
<feature type="binding site" evidence="1">
    <location>
        <position position="187"/>
    </location>
    <ligand>
        <name>ATP</name>
        <dbReference type="ChEBI" id="CHEBI:30616"/>
    </ligand>
</feature>
<feature type="binding site" evidence="1">
    <location>
        <position position="209"/>
    </location>
    <ligand>
        <name>ATP</name>
        <dbReference type="ChEBI" id="CHEBI:30616"/>
    </ligand>
</feature>
<feature type="binding site" evidence="1">
    <location>
        <begin position="258"/>
        <end position="259"/>
    </location>
    <ligand>
        <name>deamido-NAD(+)</name>
        <dbReference type="ChEBI" id="CHEBI:58437"/>
    </ligand>
</feature>
<name>NADE_BACHK</name>
<comment type="function">
    <text evidence="1">Catalyzes the ATP-dependent amidation of deamido-NAD to form NAD. Uses ammonia as a nitrogen source.</text>
</comment>
<comment type="catalytic activity">
    <reaction evidence="1">
        <text>deamido-NAD(+) + NH4(+) + ATP = AMP + diphosphate + NAD(+) + H(+)</text>
        <dbReference type="Rhea" id="RHEA:21188"/>
        <dbReference type="ChEBI" id="CHEBI:15378"/>
        <dbReference type="ChEBI" id="CHEBI:28938"/>
        <dbReference type="ChEBI" id="CHEBI:30616"/>
        <dbReference type="ChEBI" id="CHEBI:33019"/>
        <dbReference type="ChEBI" id="CHEBI:57540"/>
        <dbReference type="ChEBI" id="CHEBI:58437"/>
        <dbReference type="ChEBI" id="CHEBI:456215"/>
        <dbReference type="EC" id="6.3.1.5"/>
    </reaction>
</comment>
<comment type="pathway">
    <text evidence="1">Cofactor biosynthesis; NAD(+) biosynthesis; NAD(+) from deamido-NAD(+) (ammonia route): step 1/1.</text>
</comment>
<comment type="subunit">
    <text evidence="1">Homodimer.</text>
</comment>
<comment type="similarity">
    <text evidence="1">Belongs to the NAD synthetase family.</text>
</comment>
<keyword id="KW-0067">ATP-binding</keyword>
<keyword id="KW-0436">Ligase</keyword>
<keyword id="KW-0460">Magnesium</keyword>
<keyword id="KW-0479">Metal-binding</keyword>
<keyword id="KW-0520">NAD</keyword>
<keyword id="KW-0547">Nucleotide-binding</keyword>
<gene>
    <name evidence="1" type="primary">nadE</name>
    <name type="ordered locus">BT9727_1826</name>
</gene>